<sequence>MSVSFENKETNRGVLTFTISQDQIKPELDRVFKSVKKSLNVPGFRKGHLPRPIFDQKFGEEALYQDAMNALLPNAYEAAVKEAGLEVVAQPKIDVTSMEKGQDWVITAEVVTKPEVKLGDYKNLEVSVDVEKEVTDADVEERIERERNNLAELVIKEAAAENGDTVVIDFVGSIDGVEFDGGKGENFSLGLGSGQFIPGFEDQLVGHSAGETVDVIVTFPEDYQAEDLAGKEAKFVTTIHEVKAKEVPALDDELAKDIDEEVETLADLKEKYRKELAAAKEETYKDAVEGAAIDTAVENAEIVELPEEMIHEEVHRSVNEFLGNLQRQGINPDMYFQITGTTQEDLHNQYQAEAESRTKTNLVIEAVAKAEGFDASEEEIQKEVEQLAADYNMEVAQVQNLLSADMLKHDITIKKAVELITSTATVK</sequence>
<evidence type="ECO:0000255" key="1">
    <source>
        <dbReference type="HAMAP-Rule" id="MF_00303"/>
    </source>
</evidence>
<name>TIG_STRP2</name>
<comment type="function">
    <text evidence="1">Involved in protein export. Acts as a chaperone by maintaining the newly synthesized protein in an open conformation. Functions as a peptidyl-prolyl cis-trans isomerase.</text>
</comment>
<comment type="catalytic activity">
    <reaction evidence="1">
        <text>[protein]-peptidylproline (omega=180) = [protein]-peptidylproline (omega=0)</text>
        <dbReference type="Rhea" id="RHEA:16237"/>
        <dbReference type="Rhea" id="RHEA-COMP:10747"/>
        <dbReference type="Rhea" id="RHEA-COMP:10748"/>
        <dbReference type="ChEBI" id="CHEBI:83833"/>
        <dbReference type="ChEBI" id="CHEBI:83834"/>
        <dbReference type="EC" id="5.2.1.8"/>
    </reaction>
</comment>
<comment type="subcellular location">
    <subcellularLocation>
        <location>Cytoplasm</location>
    </subcellularLocation>
    <text evidence="1">About half TF is bound to the ribosome near the polypeptide exit tunnel while the other half is free in the cytoplasm.</text>
</comment>
<comment type="domain">
    <text evidence="1">Consists of 3 domains; the N-terminus binds the ribosome, the middle domain has PPIase activity, while the C-terminus has intrinsic chaperone activity on its own.</text>
</comment>
<comment type="similarity">
    <text evidence="1">Belongs to the FKBP-type PPIase family. Tig subfamily.</text>
</comment>
<protein>
    <recommendedName>
        <fullName evidence="1">Trigger factor</fullName>
        <shortName evidence="1">TF</shortName>
        <ecNumber evidence="1">5.2.1.8</ecNumber>
    </recommendedName>
    <alternativeName>
        <fullName evidence="1">PPIase</fullName>
    </alternativeName>
</protein>
<proteinExistence type="inferred from homology"/>
<feature type="chain" id="PRO_1000022766" description="Trigger factor">
    <location>
        <begin position="1"/>
        <end position="427"/>
    </location>
</feature>
<feature type="domain" description="PPIase FKBP-type" evidence="1">
    <location>
        <begin position="163"/>
        <end position="248"/>
    </location>
</feature>
<keyword id="KW-0131">Cell cycle</keyword>
<keyword id="KW-0132">Cell division</keyword>
<keyword id="KW-0143">Chaperone</keyword>
<keyword id="KW-0963">Cytoplasm</keyword>
<keyword id="KW-0413">Isomerase</keyword>
<keyword id="KW-1185">Reference proteome</keyword>
<keyword id="KW-0697">Rotamase</keyword>
<accession>Q04M73</accession>
<organism>
    <name type="scientific">Streptococcus pneumoniae serotype 2 (strain D39 / NCTC 7466)</name>
    <dbReference type="NCBI Taxonomy" id="373153"/>
    <lineage>
        <taxon>Bacteria</taxon>
        <taxon>Bacillati</taxon>
        <taxon>Bacillota</taxon>
        <taxon>Bacilli</taxon>
        <taxon>Lactobacillales</taxon>
        <taxon>Streptococcaceae</taxon>
        <taxon>Streptococcus</taxon>
    </lineage>
</organism>
<dbReference type="EC" id="5.2.1.8" evidence="1"/>
<dbReference type="EMBL" id="CP000410">
    <property type="protein sequence ID" value="ABJ55051.1"/>
    <property type="molecule type" value="Genomic_DNA"/>
</dbReference>
<dbReference type="RefSeq" id="WP_000116477.1">
    <property type="nucleotide sequence ID" value="NZ_JAMLJR010000009.1"/>
</dbReference>
<dbReference type="SMR" id="Q04M73"/>
<dbReference type="PaxDb" id="373153-SPD_0365"/>
<dbReference type="KEGG" id="spd:SPD_0365"/>
<dbReference type="eggNOG" id="COG0544">
    <property type="taxonomic scope" value="Bacteria"/>
</dbReference>
<dbReference type="HOGENOM" id="CLU_033058_3_2_9"/>
<dbReference type="BioCyc" id="SPNE373153:G1G6V-402-MONOMER"/>
<dbReference type="Proteomes" id="UP000001452">
    <property type="component" value="Chromosome"/>
</dbReference>
<dbReference type="GO" id="GO:0005737">
    <property type="term" value="C:cytoplasm"/>
    <property type="evidence" value="ECO:0007669"/>
    <property type="project" value="UniProtKB-SubCell"/>
</dbReference>
<dbReference type="GO" id="GO:0003755">
    <property type="term" value="F:peptidyl-prolyl cis-trans isomerase activity"/>
    <property type="evidence" value="ECO:0007669"/>
    <property type="project" value="UniProtKB-UniRule"/>
</dbReference>
<dbReference type="GO" id="GO:0044183">
    <property type="term" value="F:protein folding chaperone"/>
    <property type="evidence" value="ECO:0007669"/>
    <property type="project" value="TreeGrafter"/>
</dbReference>
<dbReference type="GO" id="GO:0043022">
    <property type="term" value="F:ribosome binding"/>
    <property type="evidence" value="ECO:0007669"/>
    <property type="project" value="TreeGrafter"/>
</dbReference>
<dbReference type="GO" id="GO:0051083">
    <property type="term" value="P:'de novo' cotranslational protein folding"/>
    <property type="evidence" value="ECO:0007669"/>
    <property type="project" value="TreeGrafter"/>
</dbReference>
<dbReference type="GO" id="GO:0051301">
    <property type="term" value="P:cell division"/>
    <property type="evidence" value="ECO:0007669"/>
    <property type="project" value="UniProtKB-KW"/>
</dbReference>
<dbReference type="GO" id="GO:0061077">
    <property type="term" value="P:chaperone-mediated protein folding"/>
    <property type="evidence" value="ECO:0007669"/>
    <property type="project" value="TreeGrafter"/>
</dbReference>
<dbReference type="GO" id="GO:0015031">
    <property type="term" value="P:protein transport"/>
    <property type="evidence" value="ECO:0007669"/>
    <property type="project" value="UniProtKB-UniRule"/>
</dbReference>
<dbReference type="GO" id="GO:0043335">
    <property type="term" value="P:protein unfolding"/>
    <property type="evidence" value="ECO:0007669"/>
    <property type="project" value="TreeGrafter"/>
</dbReference>
<dbReference type="FunFam" id="3.10.50.40:FF:000001">
    <property type="entry name" value="Trigger factor"/>
    <property type="match status" value="1"/>
</dbReference>
<dbReference type="Gene3D" id="3.10.50.40">
    <property type="match status" value="1"/>
</dbReference>
<dbReference type="Gene3D" id="3.30.70.1050">
    <property type="entry name" value="Trigger factor ribosome-binding domain"/>
    <property type="match status" value="1"/>
</dbReference>
<dbReference type="Gene3D" id="1.10.3120.10">
    <property type="entry name" value="Trigger factor, C-terminal domain"/>
    <property type="match status" value="1"/>
</dbReference>
<dbReference type="HAMAP" id="MF_00303">
    <property type="entry name" value="Trigger_factor_Tig"/>
    <property type="match status" value="1"/>
</dbReference>
<dbReference type="InterPro" id="IPR046357">
    <property type="entry name" value="PPIase_dom_sf"/>
</dbReference>
<dbReference type="InterPro" id="IPR001179">
    <property type="entry name" value="PPIase_FKBP_dom"/>
</dbReference>
<dbReference type="InterPro" id="IPR005215">
    <property type="entry name" value="Trig_fac"/>
</dbReference>
<dbReference type="InterPro" id="IPR008880">
    <property type="entry name" value="Trigger_fac_C"/>
</dbReference>
<dbReference type="InterPro" id="IPR037041">
    <property type="entry name" value="Trigger_fac_C_sf"/>
</dbReference>
<dbReference type="InterPro" id="IPR008881">
    <property type="entry name" value="Trigger_fac_ribosome-bd_bac"/>
</dbReference>
<dbReference type="InterPro" id="IPR036611">
    <property type="entry name" value="Trigger_fac_ribosome-bd_sf"/>
</dbReference>
<dbReference type="InterPro" id="IPR027304">
    <property type="entry name" value="Trigger_fact/SurA_dom_sf"/>
</dbReference>
<dbReference type="NCBIfam" id="TIGR00115">
    <property type="entry name" value="tig"/>
    <property type="match status" value="1"/>
</dbReference>
<dbReference type="PANTHER" id="PTHR30560">
    <property type="entry name" value="TRIGGER FACTOR CHAPERONE AND PEPTIDYL-PROLYL CIS/TRANS ISOMERASE"/>
    <property type="match status" value="1"/>
</dbReference>
<dbReference type="PANTHER" id="PTHR30560:SF3">
    <property type="entry name" value="TRIGGER FACTOR-LIKE PROTEIN TIG, CHLOROPLASTIC"/>
    <property type="match status" value="1"/>
</dbReference>
<dbReference type="Pfam" id="PF00254">
    <property type="entry name" value="FKBP_C"/>
    <property type="match status" value="1"/>
</dbReference>
<dbReference type="Pfam" id="PF05698">
    <property type="entry name" value="Trigger_C"/>
    <property type="match status" value="1"/>
</dbReference>
<dbReference type="Pfam" id="PF05697">
    <property type="entry name" value="Trigger_N"/>
    <property type="match status" value="1"/>
</dbReference>
<dbReference type="PIRSF" id="PIRSF003095">
    <property type="entry name" value="Trigger_factor"/>
    <property type="match status" value="1"/>
</dbReference>
<dbReference type="SUPFAM" id="SSF54534">
    <property type="entry name" value="FKBP-like"/>
    <property type="match status" value="1"/>
</dbReference>
<dbReference type="SUPFAM" id="SSF109998">
    <property type="entry name" value="Triger factor/SurA peptide-binding domain-like"/>
    <property type="match status" value="1"/>
</dbReference>
<dbReference type="SUPFAM" id="SSF102735">
    <property type="entry name" value="Trigger factor ribosome-binding domain"/>
    <property type="match status" value="1"/>
</dbReference>
<dbReference type="PROSITE" id="PS50059">
    <property type="entry name" value="FKBP_PPIASE"/>
    <property type="match status" value="1"/>
</dbReference>
<gene>
    <name evidence="1" type="primary">tig</name>
    <name type="ordered locus">SPD_0365</name>
</gene>
<reference key="1">
    <citation type="journal article" date="2007" name="J. Bacteriol.">
        <title>Genome sequence of Avery's virulent serotype 2 strain D39 of Streptococcus pneumoniae and comparison with that of unencapsulated laboratory strain R6.</title>
        <authorList>
            <person name="Lanie J.A."/>
            <person name="Ng W.-L."/>
            <person name="Kazmierczak K.M."/>
            <person name="Andrzejewski T.M."/>
            <person name="Davidsen T.M."/>
            <person name="Wayne K.J."/>
            <person name="Tettelin H."/>
            <person name="Glass J.I."/>
            <person name="Winkler M.E."/>
        </authorList>
    </citation>
    <scope>NUCLEOTIDE SEQUENCE [LARGE SCALE GENOMIC DNA]</scope>
    <source>
        <strain>D39 / NCTC 7466</strain>
    </source>
</reference>